<proteinExistence type="evidence at protein level"/>
<sequence>NLFQFAKMINGKLGAFSVWNYISYGCYCGWGGQGTPKDATDRCCFVHDCCYGRVRGCNPKLAIYSYSFKKGNIVCGKNNGCLRDICECDRVAANCFHQNKNTYNKNYKFLSSSRCRQTSEQC</sequence>
<name>PA2B_VIPAE</name>
<reference key="1">
    <citation type="journal article" date="1987" name="Biol. Chem. Hoppe-Seyler">
        <title>Sequence homology between phospholipase and its inhibitor in snake venom. The primary structure of phospholipase A2 of vipoxin from the venom of the Bulgarian viper (Vipera ammodytes ammodytes, Serpentes).</title>
        <authorList>
            <person name="Mancheva I."/>
            <person name="Kleinschmidt T."/>
            <person name="Aleksiev B."/>
            <person name="Braunitzer G."/>
        </authorList>
    </citation>
    <scope>PROTEIN SEQUENCE</scope>
    <source>
        <strain>Bulgarian</strain>
        <tissue>Venom</tissue>
    </source>
</reference>
<reference key="2">
    <citation type="journal article" date="2012" name="Interdiscip. Toxicol.">
        <title>Acute toxicity of vipoxin and its components: is the acidic component an 'inhibitor' of PLA2 toxicity?</title>
        <authorList>
            <person name="Atanasov V.N."/>
            <person name="Stoykova S."/>
            <person name="Goranova Y."/>
            <person name="Mitewa M."/>
            <person name="Petrova S."/>
        </authorList>
    </citation>
    <scope>FUNCTION</scope>
    <scope>CATALYTIC ACTIVITY</scope>
    <scope>SUBUNIT</scope>
    <scope>LETHAL DOSES</scope>
    <source>
        <tissue>Venom</tissue>
    </source>
</reference>
<reference key="3">
    <citation type="journal article" date="2013" name="Interdiscip. Toxicol.">
        <title>Hemolytic activity and platelet aggregation inhibitory effect of vipoxin's basic sPLA2 subunit.</title>
        <authorList>
            <person name="Stoykova S."/>
            <person name="Goranova Y."/>
            <person name="Pantcheva I."/>
            <person name="Atanasov V."/>
            <person name="Danchev D."/>
            <person name="Petrova S."/>
        </authorList>
    </citation>
    <scope>FUNCTION OF THE MONOMER</scope>
</reference>
<reference key="4">
    <citation type="journal article" date="1993" name="J. Mol. Biol.">
        <title>Crystals of phospholipase A2 inhibitor. The non-toxic component of vipoxin from the venom of Bulgarian viper (Vipera ammodytes).</title>
        <authorList>
            <person name="Devedjiev Y."/>
            <person name="Atanasov B."/>
            <person name="Mancheva I."/>
            <person name="Aleksiev B."/>
        </authorList>
    </citation>
    <scope>CRYSTALLIZATION</scope>
    <source>
        <tissue>Venom</tissue>
    </source>
</reference>
<reference key="5">
    <citation type="journal article" date="1993" name="J. Mol. Biol.">
        <title>Crystallization and preliminary X-ray analysis of vipoxin, a complex between a toxic phospholipase A2 and its natural polypeptide inhibitor.</title>
        <authorList>
            <person name="Betzel C."/>
            <person name="Visanji M."/>
            <person name="Wilson K.S."/>
            <person name="Genov N."/>
            <person name="Mancheva I."/>
            <person name="Aleksiev B."/>
            <person name="Singh T.P."/>
        </authorList>
    </citation>
    <scope>X-RAY CRYSTALLOGRAPHY (1.8 ANGSTROMS)</scope>
    <source>
        <tissue>Venom</tissue>
    </source>
</reference>
<reference key="6">
    <citation type="journal article" date="1997" name="FEBS Lett.">
        <title>Crystal structure of vipoxin at 2.0 A: an example of regulation of a toxic function generated by molecular evolution.</title>
        <authorList>
            <person name="Perbandt M."/>
            <person name="Wilson J.C."/>
            <person name="Eschenburg S."/>
            <person name="Mancheva I."/>
            <person name="Aleksiev B."/>
            <person name="Genov N."/>
            <person name="Willingmann P."/>
            <person name="Weber W."/>
            <person name="Singh T.P."/>
            <person name="Betzel C."/>
        </authorList>
    </citation>
    <scope>X-RAY CRYSTALLOGRAPHY (2.0 ANGSTROMS) IN COMPLEX WITH VIPOXIN A CHAIN</scope>
    <scope>DISULFIDE BONDS</scope>
</reference>
<reference key="7">
    <citation type="journal article" date="2001" name="Acta Crystallogr. D">
        <title>Structure of the neurotoxic complex vipoxin at 1.4 A resolution.</title>
        <authorList>
            <person name="Banumathi S."/>
            <person name="Rajashankar K.R."/>
            <person name="Notzel C."/>
            <person name="Aleksiev B."/>
            <person name="Singh T.P."/>
            <person name="Genov N."/>
            <person name="Betzel C."/>
        </authorList>
    </citation>
    <scope>X-RAY CRYSTALLOGRAPHY (1.4 ANGSTROMS) IN COMPLEX WITH VIPOXIN A CHAIN</scope>
    <scope>DISULFIDE BONDS</scope>
</reference>
<comment type="function">
    <text>Heterodimer: postsynaptic neurotoxin.</text>
</comment>
<comment type="function">
    <text>Monomer: snake venom phospholipase A2 (PLA2) that shows hemolytic activity and inhibition of platelet aggregation. The hemolytic activity occurs only in presence of fatty acids (unsaturated fatty acids facilitate induce a strong hemolytic activity, whereas saturated fatty acids induce a slight activity). The inhibition of platelet aggregation is almost maximal when aggregation is induced by collagen, and arachidonic acid, whereas it is only of 30% when the aggregation is induced by ADP. PLA2 catalyzes the calcium-dependent hydrolysis of the 2-acyl groups in 3-sn-phosphoglycerides.</text>
</comment>
<comment type="catalytic activity">
    <reaction evidence="2 3">
        <text>a 1,2-diacyl-sn-glycero-3-phosphocholine + H2O = a 1-acyl-sn-glycero-3-phosphocholine + a fatty acid + H(+)</text>
        <dbReference type="Rhea" id="RHEA:15801"/>
        <dbReference type="ChEBI" id="CHEBI:15377"/>
        <dbReference type="ChEBI" id="CHEBI:15378"/>
        <dbReference type="ChEBI" id="CHEBI:28868"/>
        <dbReference type="ChEBI" id="CHEBI:57643"/>
        <dbReference type="ChEBI" id="CHEBI:58168"/>
        <dbReference type="EC" id="3.1.1.4"/>
    </reaction>
</comment>
<comment type="cofactor">
    <cofactor evidence="1">
        <name>Ca(2+)</name>
        <dbReference type="ChEBI" id="CHEBI:29108"/>
    </cofactor>
    <text evidence="1">Binds 1 Ca(2+) ion.</text>
</comment>
<comment type="subunit">
    <text evidence="4 5 6">Heterodimer of A (AC P04084) and B chains; non-covalently linked. The A chain (acidic) is non-toxic, and increases the toxicity of the B chain (basic). The A chain may act as factor stabilizing the complex structure and hence retaining its toxicity by preventing non-specific binding. Upon binding to the target membranes the A chain is postulated to dissociate.</text>
</comment>
<comment type="subcellular location">
    <subcellularLocation>
        <location>Secreted</location>
    </subcellularLocation>
</comment>
<comment type="tissue specificity">
    <text>Expressed by the venom gland.</text>
</comment>
<comment type="toxic dose">
    <text evidence="5">Heterodimer: LD(50) is 0.7-1.2 mg/kg by intraperitoneal injection into mice and 0.9-1.3 mg/kg by intravenous injection into mice.</text>
</comment>
<comment type="toxic dose">
    <text evidence="5">Heterodimer: LD(50) is 0.9-1.3 mg/kg by intravenous injection into mice.</text>
</comment>
<comment type="toxic dose">
    <text evidence="5">Monomer: LD(50) is 10-13 mg/kg by intraperitoneal injection into mice.</text>
</comment>
<comment type="toxic dose">
    <text evidence="5">Monomer: LD(50) is 2.2-3.0 mg/kg by intravenous injection into mice.</text>
</comment>
<comment type="miscellaneous">
    <text evidence="8">Negative results: the B chain (not complexed with the A chain) does not induce neurotoxic symptoms, hemorrhage, organ injuries and other macroscopic changes.</text>
</comment>
<comment type="similarity">
    <text evidence="7">Belongs to the phospholipase A2 family. Group II subfamily. D49 sub-subfamily.</text>
</comment>
<comment type="caution">
    <text evidence="7">The acidic chain was originally postulated to act as an inhibitor of the basic chain.</text>
</comment>
<protein>
    <recommendedName>
        <fullName>Basic phospholipase A2 vipoxin B chain</fullName>
        <shortName>svPLA2</shortName>
        <ecNumber>3.1.1.4</ecNumber>
    </recommendedName>
    <alternativeName>
        <fullName>Phosphatidylcholine 2-acylhydrolase</fullName>
    </alternativeName>
    <alternativeName>
        <fullName>Vipoxin toxic component</fullName>
    </alternativeName>
</protein>
<accession>P14420</accession>
<dbReference type="EC" id="3.1.1.4"/>
<dbReference type="PIR" id="A29290">
    <property type="entry name" value="A29290"/>
</dbReference>
<dbReference type="PDB" id="1AOK">
    <property type="method" value="X-ray"/>
    <property type="resolution" value="2.00 A"/>
    <property type="chains" value="B=1-122"/>
</dbReference>
<dbReference type="PDB" id="1JLT">
    <property type="method" value="X-ray"/>
    <property type="resolution" value="1.40 A"/>
    <property type="chains" value="B=1-122"/>
</dbReference>
<dbReference type="PDB" id="1RGB">
    <property type="method" value="X-ray"/>
    <property type="resolution" value="3.30 A"/>
    <property type="chains" value="A/B/K/L=1-122"/>
</dbReference>
<dbReference type="PDBsum" id="1AOK"/>
<dbReference type="PDBsum" id="1JLT"/>
<dbReference type="PDBsum" id="1RGB"/>
<dbReference type="SMR" id="P14420"/>
<dbReference type="MINT" id="P14420"/>
<dbReference type="EvolutionaryTrace" id="P14420"/>
<dbReference type="GO" id="GO:0005576">
    <property type="term" value="C:extracellular region"/>
    <property type="evidence" value="ECO:0007669"/>
    <property type="project" value="UniProtKB-SubCell"/>
</dbReference>
<dbReference type="GO" id="GO:0005509">
    <property type="term" value="F:calcium ion binding"/>
    <property type="evidence" value="ECO:0007669"/>
    <property type="project" value="InterPro"/>
</dbReference>
<dbReference type="GO" id="GO:0047498">
    <property type="term" value="F:calcium-dependent phospholipase A2 activity"/>
    <property type="evidence" value="ECO:0007669"/>
    <property type="project" value="TreeGrafter"/>
</dbReference>
<dbReference type="GO" id="GO:0005543">
    <property type="term" value="F:phospholipid binding"/>
    <property type="evidence" value="ECO:0007669"/>
    <property type="project" value="TreeGrafter"/>
</dbReference>
<dbReference type="GO" id="GO:0090729">
    <property type="term" value="F:toxin activity"/>
    <property type="evidence" value="ECO:0007669"/>
    <property type="project" value="UniProtKB-KW"/>
</dbReference>
<dbReference type="GO" id="GO:0050482">
    <property type="term" value="P:arachidonate secretion"/>
    <property type="evidence" value="ECO:0007669"/>
    <property type="project" value="InterPro"/>
</dbReference>
<dbReference type="GO" id="GO:0031640">
    <property type="term" value="P:killing of cells of another organism"/>
    <property type="evidence" value="ECO:0007669"/>
    <property type="project" value="UniProtKB-KW"/>
</dbReference>
<dbReference type="GO" id="GO:0016042">
    <property type="term" value="P:lipid catabolic process"/>
    <property type="evidence" value="ECO:0007669"/>
    <property type="project" value="UniProtKB-KW"/>
</dbReference>
<dbReference type="GO" id="GO:0042130">
    <property type="term" value="P:negative regulation of T cell proliferation"/>
    <property type="evidence" value="ECO:0007669"/>
    <property type="project" value="TreeGrafter"/>
</dbReference>
<dbReference type="GO" id="GO:0006644">
    <property type="term" value="P:phospholipid metabolic process"/>
    <property type="evidence" value="ECO:0007669"/>
    <property type="project" value="InterPro"/>
</dbReference>
<dbReference type="CDD" id="cd00125">
    <property type="entry name" value="PLA2c"/>
    <property type="match status" value="1"/>
</dbReference>
<dbReference type="FunFam" id="1.20.90.10:FF:000001">
    <property type="entry name" value="Basic phospholipase A2 homolog"/>
    <property type="match status" value="1"/>
</dbReference>
<dbReference type="Gene3D" id="1.20.90.10">
    <property type="entry name" value="Phospholipase A2 domain"/>
    <property type="match status" value="1"/>
</dbReference>
<dbReference type="InterPro" id="IPR001211">
    <property type="entry name" value="PLipase_A2"/>
</dbReference>
<dbReference type="InterPro" id="IPR033112">
    <property type="entry name" value="PLipase_A2_Asp_AS"/>
</dbReference>
<dbReference type="InterPro" id="IPR016090">
    <property type="entry name" value="PLipase_A2_dom"/>
</dbReference>
<dbReference type="InterPro" id="IPR036444">
    <property type="entry name" value="PLipase_A2_dom_sf"/>
</dbReference>
<dbReference type="InterPro" id="IPR033113">
    <property type="entry name" value="PLipase_A2_His_AS"/>
</dbReference>
<dbReference type="PANTHER" id="PTHR11716">
    <property type="entry name" value="PHOSPHOLIPASE A2 FAMILY MEMBER"/>
    <property type="match status" value="1"/>
</dbReference>
<dbReference type="PANTHER" id="PTHR11716:SF9">
    <property type="entry name" value="PHOSPHOLIPASE A2, MEMBRANE ASSOCIATED"/>
    <property type="match status" value="1"/>
</dbReference>
<dbReference type="Pfam" id="PF00068">
    <property type="entry name" value="Phospholip_A2_1"/>
    <property type="match status" value="1"/>
</dbReference>
<dbReference type="PRINTS" id="PR00389">
    <property type="entry name" value="PHPHLIPASEA2"/>
</dbReference>
<dbReference type="SMART" id="SM00085">
    <property type="entry name" value="PA2c"/>
    <property type="match status" value="1"/>
</dbReference>
<dbReference type="SUPFAM" id="SSF48619">
    <property type="entry name" value="Phospholipase A2, PLA2"/>
    <property type="match status" value="1"/>
</dbReference>
<dbReference type="PROSITE" id="PS00119">
    <property type="entry name" value="PA2_ASP"/>
    <property type="match status" value="1"/>
</dbReference>
<dbReference type="PROSITE" id="PS00118">
    <property type="entry name" value="PA2_HIS"/>
    <property type="match status" value="1"/>
</dbReference>
<evidence type="ECO:0000250" key="1">
    <source>
        <dbReference type="UniProtKB" id="P14418"/>
    </source>
</evidence>
<evidence type="ECO:0000255" key="2">
    <source>
        <dbReference type="PROSITE-ProRule" id="PRU10035"/>
    </source>
</evidence>
<evidence type="ECO:0000255" key="3">
    <source>
        <dbReference type="PROSITE-ProRule" id="PRU10036"/>
    </source>
</evidence>
<evidence type="ECO:0000269" key="4">
    <source>
    </source>
</evidence>
<evidence type="ECO:0000269" key="5">
    <source>
    </source>
</evidence>
<evidence type="ECO:0000269" key="6">
    <source>
    </source>
</evidence>
<evidence type="ECO:0000305" key="7"/>
<evidence type="ECO:0000305" key="8">
    <source>
    </source>
</evidence>
<evidence type="ECO:0000305" key="9">
    <source>
    </source>
</evidence>
<evidence type="ECO:0007744" key="10">
    <source>
        <dbReference type="PDB" id="1AOK"/>
    </source>
</evidence>
<evidence type="ECO:0007744" key="11">
    <source>
        <dbReference type="PDB" id="1JLT"/>
    </source>
</evidence>
<evidence type="ECO:0007829" key="12">
    <source>
        <dbReference type="PDB" id="1JLT"/>
    </source>
</evidence>
<organism>
    <name type="scientific">Vipera ammodytes meridionalis</name>
    <name type="common">Eastern sand viper</name>
    <dbReference type="NCBI Taxonomy" id="73841"/>
    <lineage>
        <taxon>Eukaryota</taxon>
        <taxon>Metazoa</taxon>
        <taxon>Chordata</taxon>
        <taxon>Craniata</taxon>
        <taxon>Vertebrata</taxon>
        <taxon>Euteleostomi</taxon>
        <taxon>Lepidosauria</taxon>
        <taxon>Squamata</taxon>
        <taxon>Bifurcata</taxon>
        <taxon>Unidentata</taxon>
        <taxon>Episquamata</taxon>
        <taxon>Toxicofera</taxon>
        <taxon>Serpentes</taxon>
        <taxon>Colubroidea</taxon>
        <taxon>Viperidae</taxon>
        <taxon>Viperinae</taxon>
        <taxon>Vipera</taxon>
    </lineage>
</organism>
<keyword id="KW-0002">3D-structure</keyword>
<keyword id="KW-0106">Calcium</keyword>
<keyword id="KW-0204">Cytolysis</keyword>
<keyword id="KW-0903">Direct protein sequencing</keyword>
<keyword id="KW-1015">Disulfide bond</keyword>
<keyword id="KW-0354">Hemolysis</keyword>
<keyword id="KW-1199">Hemostasis impairing toxin</keyword>
<keyword id="KW-0378">Hydrolase</keyword>
<keyword id="KW-0442">Lipid degradation</keyword>
<keyword id="KW-0443">Lipid metabolism</keyword>
<keyword id="KW-0479">Metal-binding</keyword>
<keyword id="KW-0528">Neurotoxin</keyword>
<keyword id="KW-1201">Platelet aggregation inhibiting toxin</keyword>
<keyword id="KW-0629">Postsynaptic neurotoxin</keyword>
<keyword id="KW-0964">Secreted</keyword>
<keyword id="KW-0800">Toxin</keyword>
<feature type="chain" id="PRO_0000161712" description="Basic phospholipase A2 vipoxin B chain">
    <location>
        <begin position="1"/>
        <end position="122"/>
    </location>
</feature>
<feature type="active site" evidence="9">
    <location>
        <position position="47"/>
    </location>
</feature>
<feature type="active site" evidence="9">
    <location>
        <position position="89"/>
    </location>
</feature>
<feature type="binding site" evidence="1">
    <location>
        <position position="27"/>
    </location>
    <ligand>
        <name>Ca(2+)</name>
        <dbReference type="ChEBI" id="CHEBI:29108"/>
    </ligand>
</feature>
<feature type="binding site" evidence="1">
    <location>
        <position position="29"/>
    </location>
    <ligand>
        <name>Ca(2+)</name>
        <dbReference type="ChEBI" id="CHEBI:29108"/>
    </ligand>
</feature>
<feature type="binding site" evidence="1">
    <location>
        <position position="31"/>
    </location>
    <ligand>
        <name>Ca(2+)</name>
        <dbReference type="ChEBI" id="CHEBI:29108"/>
    </ligand>
</feature>
<feature type="binding site" evidence="1">
    <location>
        <position position="48"/>
    </location>
    <ligand>
        <name>Ca(2+)</name>
        <dbReference type="ChEBI" id="CHEBI:29108"/>
    </ligand>
</feature>
<feature type="disulfide bond" evidence="4 6 10 11">
    <location>
        <begin position="26"/>
        <end position="115"/>
    </location>
</feature>
<feature type="disulfide bond" evidence="4 6 10 11">
    <location>
        <begin position="28"/>
        <end position="44"/>
    </location>
</feature>
<feature type="disulfide bond" evidence="4 6 10 11">
    <location>
        <begin position="43"/>
        <end position="95"/>
    </location>
</feature>
<feature type="disulfide bond" evidence="4 6 10 11">
    <location>
        <begin position="49"/>
        <end position="122"/>
    </location>
</feature>
<feature type="disulfide bond" evidence="4 6 10 11">
    <location>
        <begin position="50"/>
        <end position="88"/>
    </location>
</feature>
<feature type="disulfide bond" evidence="4 6 10 11">
    <location>
        <begin position="57"/>
        <end position="81"/>
    </location>
</feature>
<feature type="disulfide bond" evidence="4 6 10 11">
    <location>
        <begin position="75"/>
        <end position="86"/>
    </location>
</feature>
<feature type="helix" evidence="12">
    <location>
        <begin position="2"/>
        <end position="13"/>
    </location>
</feature>
<feature type="helix" evidence="12">
    <location>
        <begin position="17"/>
        <end position="21"/>
    </location>
</feature>
<feature type="strand" evidence="12">
    <location>
        <begin position="22"/>
        <end position="24"/>
    </location>
</feature>
<feature type="turn" evidence="12">
    <location>
        <begin position="25"/>
        <end position="27"/>
    </location>
</feature>
<feature type="strand" evidence="12">
    <location>
        <begin position="28"/>
        <end position="30"/>
    </location>
</feature>
<feature type="helix" evidence="12">
    <location>
        <begin position="39"/>
        <end position="52"/>
    </location>
</feature>
<feature type="turn" evidence="12">
    <location>
        <begin position="59"/>
        <end position="61"/>
    </location>
</feature>
<feature type="strand" evidence="12">
    <location>
        <begin position="66"/>
        <end position="69"/>
    </location>
</feature>
<feature type="strand" evidence="12">
    <location>
        <begin position="72"/>
        <end position="75"/>
    </location>
</feature>
<feature type="helix" evidence="12">
    <location>
        <begin position="81"/>
        <end position="98"/>
    </location>
</feature>
<feature type="helix" evidence="12">
    <location>
        <begin position="100"/>
        <end position="102"/>
    </location>
</feature>
<feature type="helix" evidence="12">
    <location>
        <begin position="105"/>
        <end position="107"/>
    </location>
</feature>
<feature type="helix" evidence="12">
    <location>
        <begin position="112"/>
        <end position="115"/>
    </location>
</feature>